<protein>
    <recommendedName>
        <fullName>Prokineticin-1</fullName>
    </recommendedName>
    <alternativeName>
        <fullName>Endocrine-gland-derived vascular endothelial growth factor</fullName>
        <shortName>EG-VEGF</shortName>
    </alternativeName>
</protein>
<evidence type="ECO:0000250" key="1"/>
<evidence type="ECO:0000255" key="2"/>
<evidence type="ECO:0000305" key="3"/>
<organism>
    <name type="scientific">Rattus norvegicus</name>
    <name type="common">Rat</name>
    <dbReference type="NCBI Taxonomy" id="10116"/>
    <lineage>
        <taxon>Eukaryota</taxon>
        <taxon>Metazoa</taxon>
        <taxon>Chordata</taxon>
        <taxon>Craniata</taxon>
        <taxon>Vertebrata</taxon>
        <taxon>Euteleostomi</taxon>
        <taxon>Mammalia</taxon>
        <taxon>Eutheria</taxon>
        <taxon>Euarchontoglires</taxon>
        <taxon>Glires</taxon>
        <taxon>Rodentia</taxon>
        <taxon>Myomorpha</taxon>
        <taxon>Muroidea</taxon>
        <taxon>Muridae</taxon>
        <taxon>Murinae</taxon>
        <taxon>Rattus</taxon>
    </lineage>
</organism>
<proteinExistence type="inferred from homology"/>
<keyword id="KW-0037">Angiogenesis</keyword>
<keyword id="KW-1015">Disulfide bond</keyword>
<keyword id="KW-0339">Growth factor</keyword>
<keyword id="KW-0497">Mitogen</keyword>
<keyword id="KW-1185">Reference proteome</keyword>
<keyword id="KW-0964">Secreted</keyword>
<keyword id="KW-0732">Signal</keyword>
<gene>
    <name type="primary">Prok1</name>
</gene>
<feature type="signal peptide" evidence="2">
    <location>
        <begin position="1"/>
        <end position="19"/>
    </location>
</feature>
<feature type="chain" id="PRO_0000025808" description="Prokineticin-1">
    <location>
        <begin position="20"/>
        <end position="105"/>
    </location>
</feature>
<feature type="disulfide bond" evidence="1">
    <location>
        <begin position="26"/>
        <end position="38"/>
    </location>
</feature>
<feature type="disulfide bond" evidence="1">
    <location>
        <begin position="32"/>
        <end position="50"/>
    </location>
</feature>
<feature type="disulfide bond" evidence="1">
    <location>
        <begin position="37"/>
        <end position="78"/>
    </location>
</feature>
<feature type="disulfide bond" evidence="1">
    <location>
        <begin position="60"/>
        <end position="86"/>
    </location>
</feature>
<feature type="disulfide bond" evidence="1">
    <location>
        <begin position="80"/>
        <end position="96"/>
    </location>
</feature>
<reference key="1">
    <citation type="journal article" date="2002" name="Biochem. Biophys. Res. Commun.">
        <title>Isolation and identification of EG-VEGF/prokineticins as cognate ligands for two orphan G-protein-coupled receptors.</title>
        <authorList>
            <person name="Masuda Y."/>
            <person name="Takatsu Y."/>
            <person name="Terao Y."/>
            <person name="Kumano S."/>
            <person name="Ishibashi Y."/>
            <person name="Suenaga M."/>
            <person name="Abe M."/>
            <person name="Fukusumi S."/>
            <person name="Watanabe T."/>
            <person name="Shintani Y."/>
            <person name="Yamada T."/>
            <person name="Hinuma S."/>
            <person name="Inatomi N."/>
            <person name="Ohtaki T."/>
            <person name="Onda H."/>
            <person name="Fujino M."/>
        </authorList>
    </citation>
    <scope>NUCLEOTIDE SEQUENCE [MRNA]</scope>
    <source>
        <strain>Sprague-Dawley</strain>
    </source>
</reference>
<dbReference type="EMBL" id="AY089983">
    <property type="protein sequence ID" value="AAM09104.1"/>
    <property type="molecule type" value="mRNA"/>
</dbReference>
<dbReference type="RefSeq" id="NP_620206.1">
    <property type="nucleotide sequence ID" value="NM_138851.2"/>
</dbReference>
<dbReference type="RefSeq" id="XP_017446090.1">
    <property type="nucleotide sequence ID" value="XM_017590601.1"/>
</dbReference>
<dbReference type="SMR" id="Q8R414"/>
<dbReference type="FunCoup" id="Q8R414">
    <property type="interactions" value="41"/>
</dbReference>
<dbReference type="STRING" id="10116.ENSRNOP00000024519"/>
<dbReference type="PhosphoSitePlus" id="Q8R414"/>
<dbReference type="PaxDb" id="10116-ENSRNOP00000024519"/>
<dbReference type="Ensembl" id="ENSRNOT00000024519.3">
    <property type="protein sequence ID" value="ENSRNOP00000024519.1"/>
    <property type="gene ID" value="ENSRNOG00000018201.3"/>
</dbReference>
<dbReference type="GeneID" id="192205"/>
<dbReference type="KEGG" id="rno:192205"/>
<dbReference type="UCSC" id="RGD:620898">
    <property type="organism name" value="rat"/>
</dbReference>
<dbReference type="AGR" id="RGD:620898"/>
<dbReference type="CTD" id="84432"/>
<dbReference type="RGD" id="620898">
    <property type="gene designation" value="Prok1"/>
</dbReference>
<dbReference type="eggNOG" id="ENOG502S1PW">
    <property type="taxonomic scope" value="Eukaryota"/>
</dbReference>
<dbReference type="GeneTree" id="ENSGT00940000161331"/>
<dbReference type="HOGENOM" id="CLU_143202_2_0_1"/>
<dbReference type="InParanoid" id="Q8R414"/>
<dbReference type="OMA" id="LYKCAVI"/>
<dbReference type="OrthoDB" id="19779at9989"/>
<dbReference type="PhylomeDB" id="Q8R414"/>
<dbReference type="TreeFam" id="TF332732"/>
<dbReference type="Reactome" id="R-RNO-375276">
    <property type="pathway name" value="Peptide ligand-binding receptors"/>
</dbReference>
<dbReference type="Reactome" id="R-RNO-416476">
    <property type="pathway name" value="G alpha (q) signalling events"/>
</dbReference>
<dbReference type="PRO" id="PR:Q8R414"/>
<dbReference type="Proteomes" id="UP000002494">
    <property type="component" value="Chromosome 2"/>
</dbReference>
<dbReference type="Bgee" id="ENSRNOG00000018201">
    <property type="expression patterns" value="Expressed in kidney and 3 other cell types or tissues"/>
</dbReference>
<dbReference type="GO" id="GO:0005576">
    <property type="term" value="C:extracellular region"/>
    <property type="evidence" value="ECO:0000266"/>
    <property type="project" value="RGD"/>
</dbReference>
<dbReference type="GO" id="GO:0008083">
    <property type="term" value="F:growth factor activity"/>
    <property type="evidence" value="ECO:0007669"/>
    <property type="project" value="UniProtKB-KW"/>
</dbReference>
<dbReference type="GO" id="GO:0001525">
    <property type="term" value="P:angiogenesis"/>
    <property type="evidence" value="ECO:0007669"/>
    <property type="project" value="UniProtKB-KW"/>
</dbReference>
<dbReference type="GO" id="GO:0008283">
    <property type="term" value="P:cell population proliferation"/>
    <property type="evidence" value="ECO:0000266"/>
    <property type="project" value="RGD"/>
</dbReference>
<dbReference type="GO" id="GO:0001935">
    <property type="term" value="P:endothelial cell proliferation"/>
    <property type="evidence" value="ECO:0000318"/>
    <property type="project" value="GO_Central"/>
</dbReference>
<dbReference type="GO" id="GO:0051781">
    <property type="term" value="P:positive regulation of cell division"/>
    <property type="evidence" value="ECO:0007669"/>
    <property type="project" value="UniProtKB-KW"/>
</dbReference>
<dbReference type="GO" id="GO:0043410">
    <property type="term" value="P:positive regulation of MAPK cascade"/>
    <property type="evidence" value="ECO:0000266"/>
    <property type="project" value="RGD"/>
</dbReference>
<dbReference type="GO" id="GO:1905564">
    <property type="term" value="P:positive regulation of vascular endothelial cell proliferation"/>
    <property type="evidence" value="ECO:0000266"/>
    <property type="project" value="RGD"/>
</dbReference>
<dbReference type="GO" id="GO:0045765">
    <property type="term" value="P:regulation of angiogenesis"/>
    <property type="evidence" value="ECO:0000266"/>
    <property type="project" value="RGD"/>
</dbReference>
<dbReference type="GO" id="GO:0101023">
    <property type="term" value="P:vascular endothelial cell proliferation"/>
    <property type="evidence" value="ECO:0000266"/>
    <property type="project" value="RGD"/>
</dbReference>
<dbReference type="FunFam" id="2.10.80.10:FF:000004">
    <property type="entry name" value="Prokineticin 1"/>
    <property type="match status" value="1"/>
</dbReference>
<dbReference type="Gene3D" id="2.10.80.10">
    <property type="entry name" value="Lipase, subunit A"/>
    <property type="match status" value="1"/>
</dbReference>
<dbReference type="InterPro" id="IPR009523">
    <property type="entry name" value="Prokineticin"/>
</dbReference>
<dbReference type="InterPro" id="IPR023569">
    <property type="entry name" value="Prokineticin_domain"/>
</dbReference>
<dbReference type="PANTHER" id="PTHR18821">
    <property type="entry name" value="PROKINETICIN"/>
    <property type="match status" value="1"/>
</dbReference>
<dbReference type="PANTHER" id="PTHR18821:SF7">
    <property type="entry name" value="PROKINETICIN-1"/>
    <property type="match status" value="1"/>
</dbReference>
<dbReference type="Pfam" id="PF06607">
    <property type="entry name" value="Prokineticin"/>
    <property type="match status" value="1"/>
</dbReference>
<dbReference type="SUPFAM" id="SSF57190">
    <property type="entry name" value="Colipase-like"/>
    <property type="match status" value="2"/>
</dbReference>
<accession>Q8R414</accession>
<sequence length="105" mass="11643">MRGAVQVFIMLLLATVSDCAVITGACERDVQCGAGTCCAISLWLRGLRLCTPLGREGEECHPGSHKIPFFRKRQHHTCPCSPSLLCSRFPDGRYRCSQDLKNVNF</sequence>
<comment type="function">
    <text evidence="1">Potently contracts gastrointestinal (GI) smooth muscle. Induces proliferation, migration and fenestration (the formation of membrane discontinuities) in capillary endothelial cells derived from endocrine glands. Has little or no effect on a variety of other endothelial and non-endothelial cell types. Induces proliferation and differentiation, but not migration, of enteric neural crest cells. Directly influences neuroblastoma progression by promoting the proliferation and migration of neuroblastoma cells. Positively regulates PTGS2 expression and prostaglandin synthesis. May play a role in placentation. May play a role in normal and pathological testis angiogenesis (By similarity).</text>
</comment>
<comment type="subcellular location">
    <subcellularLocation>
        <location evidence="1">Secreted</location>
    </subcellularLocation>
</comment>
<comment type="similarity">
    <text evidence="3">Belongs to the AVIT (prokineticin) family.</text>
</comment>
<name>PROK1_RAT</name>